<gene>
    <name evidence="1" type="primary">pdxY</name>
    <name type="ordered locus">PA14_72780</name>
</gene>
<organism>
    <name type="scientific">Pseudomonas aeruginosa (strain UCBPP-PA14)</name>
    <dbReference type="NCBI Taxonomy" id="208963"/>
    <lineage>
        <taxon>Bacteria</taxon>
        <taxon>Pseudomonadati</taxon>
        <taxon>Pseudomonadota</taxon>
        <taxon>Gammaproteobacteria</taxon>
        <taxon>Pseudomonadales</taxon>
        <taxon>Pseudomonadaceae</taxon>
        <taxon>Pseudomonas</taxon>
    </lineage>
</organism>
<name>PDXY_PSEAB</name>
<dbReference type="EC" id="2.7.1.35" evidence="1"/>
<dbReference type="EMBL" id="CP000438">
    <property type="protein sequence ID" value="ABJ14902.1"/>
    <property type="molecule type" value="Genomic_DNA"/>
</dbReference>
<dbReference type="RefSeq" id="WP_003142148.1">
    <property type="nucleotide sequence ID" value="NZ_CP034244.1"/>
</dbReference>
<dbReference type="SMR" id="Q02DJ3"/>
<dbReference type="KEGG" id="pau:PA14_72780"/>
<dbReference type="PseudoCAP" id="PA14_72780"/>
<dbReference type="HOGENOM" id="CLU_046496_3_0_6"/>
<dbReference type="BioCyc" id="PAER208963:G1G74-6122-MONOMER"/>
<dbReference type="UniPathway" id="UPA01068">
    <property type="reaction ID" value="UER00298"/>
</dbReference>
<dbReference type="Proteomes" id="UP000000653">
    <property type="component" value="Chromosome"/>
</dbReference>
<dbReference type="GO" id="GO:0005829">
    <property type="term" value="C:cytosol"/>
    <property type="evidence" value="ECO:0007669"/>
    <property type="project" value="TreeGrafter"/>
</dbReference>
<dbReference type="GO" id="GO:0005524">
    <property type="term" value="F:ATP binding"/>
    <property type="evidence" value="ECO:0007669"/>
    <property type="project" value="UniProtKB-UniRule"/>
</dbReference>
<dbReference type="GO" id="GO:0000287">
    <property type="term" value="F:magnesium ion binding"/>
    <property type="evidence" value="ECO:0007669"/>
    <property type="project" value="UniProtKB-UniRule"/>
</dbReference>
<dbReference type="GO" id="GO:0008478">
    <property type="term" value="F:pyridoxal kinase activity"/>
    <property type="evidence" value="ECO:0007669"/>
    <property type="project" value="UniProtKB-UniRule"/>
</dbReference>
<dbReference type="GO" id="GO:0009443">
    <property type="term" value="P:pyridoxal 5'-phosphate salvage"/>
    <property type="evidence" value="ECO:0007669"/>
    <property type="project" value="UniProtKB-UniRule"/>
</dbReference>
<dbReference type="CDD" id="cd01173">
    <property type="entry name" value="pyridoxal_pyridoxamine_kinase"/>
    <property type="match status" value="1"/>
</dbReference>
<dbReference type="FunFam" id="3.40.1190.20:FF:000008">
    <property type="entry name" value="Pyridoxal kinase PdxY"/>
    <property type="match status" value="1"/>
</dbReference>
<dbReference type="Gene3D" id="3.40.1190.20">
    <property type="match status" value="1"/>
</dbReference>
<dbReference type="HAMAP" id="MF_01639">
    <property type="entry name" value="PdxY"/>
    <property type="match status" value="1"/>
</dbReference>
<dbReference type="InterPro" id="IPR013749">
    <property type="entry name" value="PM/HMP-P_kinase-1"/>
</dbReference>
<dbReference type="InterPro" id="IPR004625">
    <property type="entry name" value="PyrdxlKinase"/>
</dbReference>
<dbReference type="InterPro" id="IPR023685">
    <property type="entry name" value="Pyridoxal_kinase_PdxY"/>
</dbReference>
<dbReference type="InterPro" id="IPR029056">
    <property type="entry name" value="Ribokinase-like"/>
</dbReference>
<dbReference type="NCBIfam" id="NF004398">
    <property type="entry name" value="PRK05756.1"/>
    <property type="match status" value="1"/>
</dbReference>
<dbReference type="NCBIfam" id="TIGR00687">
    <property type="entry name" value="pyridox_kin"/>
    <property type="match status" value="1"/>
</dbReference>
<dbReference type="PANTHER" id="PTHR10534">
    <property type="entry name" value="PYRIDOXAL KINASE"/>
    <property type="match status" value="1"/>
</dbReference>
<dbReference type="PANTHER" id="PTHR10534:SF2">
    <property type="entry name" value="PYRIDOXAL KINASE"/>
    <property type="match status" value="1"/>
</dbReference>
<dbReference type="Pfam" id="PF08543">
    <property type="entry name" value="Phos_pyr_kin"/>
    <property type="match status" value="1"/>
</dbReference>
<dbReference type="SUPFAM" id="SSF53613">
    <property type="entry name" value="Ribokinase-like"/>
    <property type="match status" value="1"/>
</dbReference>
<comment type="function">
    <text evidence="1">Pyridoxal kinase involved in the salvage pathway of pyridoxal 5'-phosphate (PLP). Catalyzes the phosphorylation of pyridoxal to PLP.</text>
</comment>
<comment type="catalytic activity">
    <reaction evidence="1">
        <text>pyridoxal + ATP = pyridoxal 5'-phosphate + ADP + H(+)</text>
        <dbReference type="Rhea" id="RHEA:10224"/>
        <dbReference type="ChEBI" id="CHEBI:15378"/>
        <dbReference type="ChEBI" id="CHEBI:17310"/>
        <dbReference type="ChEBI" id="CHEBI:30616"/>
        <dbReference type="ChEBI" id="CHEBI:456216"/>
        <dbReference type="ChEBI" id="CHEBI:597326"/>
        <dbReference type="EC" id="2.7.1.35"/>
    </reaction>
</comment>
<comment type="cofactor">
    <cofactor evidence="1">
        <name>Mg(2+)</name>
        <dbReference type="ChEBI" id="CHEBI:18420"/>
    </cofactor>
</comment>
<comment type="pathway">
    <text evidence="1">Cofactor metabolism; pyridoxal 5'-phosphate salvage; pyridoxal 5'-phosphate from pyridoxal: step 1/1.</text>
</comment>
<comment type="subunit">
    <text evidence="1">Homodimer.</text>
</comment>
<comment type="similarity">
    <text evidence="1">Belongs to the pyridoxine kinase family. PdxY subfamily.</text>
</comment>
<feature type="chain" id="PRO_1000069887" description="Pyridoxal kinase PdxY">
    <location>
        <begin position="1"/>
        <end position="288"/>
    </location>
</feature>
<feature type="binding site" evidence="1">
    <location>
        <position position="12"/>
    </location>
    <ligand>
        <name>substrate</name>
    </ligand>
</feature>
<feature type="binding site" evidence="1">
    <location>
        <begin position="47"/>
        <end position="48"/>
    </location>
    <ligand>
        <name>substrate</name>
    </ligand>
</feature>
<feature type="binding site" evidence="1">
    <location>
        <position position="114"/>
    </location>
    <ligand>
        <name>ATP</name>
        <dbReference type="ChEBI" id="CHEBI:30616"/>
    </ligand>
</feature>
<feature type="binding site" evidence="1">
    <location>
        <position position="151"/>
    </location>
    <ligand>
        <name>ATP</name>
        <dbReference type="ChEBI" id="CHEBI:30616"/>
    </ligand>
</feature>
<feature type="binding site" evidence="1">
    <location>
        <position position="184"/>
    </location>
    <ligand>
        <name>ATP</name>
        <dbReference type="ChEBI" id="CHEBI:30616"/>
    </ligand>
</feature>
<feature type="binding site" evidence="1">
    <location>
        <begin position="211"/>
        <end position="214"/>
    </location>
    <ligand>
        <name>ATP</name>
        <dbReference type="ChEBI" id="CHEBI:30616"/>
    </ligand>
</feature>
<feature type="binding site" evidence="1">
    <location>
        <position position="225"/>
    </location>
    <ligand>
        <name>substrate</name>
    </ligand>
</feature>
<keyword id="KW-0067">ATP-binding</keyword>
<keyword id="KW-0418">Kinase</keyword>
<keyword id="KW-0460">Magnesium</keyword>
<keyword id="KW-0547">Nucleotide-binding</keyword>
<keyword id="KW-0808">Transferase</keyword>
<protein>
    <recommendedName>
        <fullName evidence="1">Pyridoxal kinase PdxY</fullName>
        <shortName evidence="1">PL kinase</shortName>
        <ecNumber evidence="1">2.7.1.35</ecNumber>
    </recommendedName>
</protein>
<sequence>MPRTPHLLAIQSHVVFGHAGNAAAVFPMQRIGINVWPLNTVQFSNHTQYGQWTGQVLPPEQIPALVDGIAGIGELGNCDAVLSGYLGSAAQGRAILDVVARIKQANPRALYLCDPVMGHPEKGCIVAPEVSDFLLEEAAAVADYLCPNQLELDSFCDRQPNSLADCVEMARSLLARGPRAILVKHLNYPGKAGDTFEMLLVAADQAWHLQRPLLAFPRQPVGVGDLASGLFLSRLLLGDDLRNAFEFAGAAVHEVLLETQACGSYELELVRAQDRIAHPRVRFDAVRL</sequence>
<reference key="1">
    <citation type="journal article" date="2006" name="Genome Biol.">
        <title>Genomic analysis reveals that Pseudomonas aeruginosa virulence is combinatorial.</title>
        <authorList>
            <person name="Lee D.G."/>
            <person name="Urbach J.M."/>
            <person name="Wu G."/>
            <person name="Liberati N.T."/>
            <person name="Feinbaum R.L."/>
            <person name="Miyata S."/>
            <person name="Diggins L.T."/>
            <person name="He J."/>
            <person name="Saucier M."/>
            <person name="Deziel E."/>
            <person name="Friedman L."/>
            <person name="Li L."/>
            <person name="Grills G."/>
            <person name="Montgomery K."/>
            <person name="Kucherlapati R."/>
            <person name="Rahme L.G."/>
            <person name="Ausubel F.M."/>
        </authorList>
    </citation>
    <scope>NUCLEOTIDE SEQUENCE [LARGE SCALE GENOMIC DNA]</scope>
    <source>
        <strain>UCBPP-PA14</strain>
    </source>
</reference>
<proteinExistence type="inferred from homology"/>
<accession>Q02DJ3</accession>
<evidence type="ECO:0000255" key="1">
    <source>
        <dbReference type="HAMAP-Rule" id="MF_01639"/>
    </source>
</evidence>